<name>CCME_ECOSM</name>
<comment type="function">
    <text evidence="1">Heme chaperone required for the biogenesis of c-type cytochromes. Transiently binds heme delivered by CcmC and transfers the heme to apo-cytochromes in a process facilitated by CcmF and CcmH.</text>
</comment>
<comment type="subcellular location">
    <subcellularLocation>
        <location evidence="1">Cell inner membrane</location>
        <topology evidence="1">Single-pass type II membrane protein</topology>
        <orientation evidence="1">Periplasmic side</orientation>
    </subcellularLocation>
</comment>
<comment type="similarity">
    <text evidence="1">Belongs to the CcmE/CycJ family.</text>
</comment>
<protein>
    <recommendedName>
        <fullName evidence="1">Cytochrome c-type biogenesis protein CcmE</fullName>
    </recommendedName>
    <alternativeName>
        <fullName evidence="1">Cytochrome c maturation protein E</fullName>
    </alternativeName>
    <alternativeName>
        <fullName evidence="1">Heme chaperone CcmE</fullName>
    </alternativeName>
</protein>
<proteinExistence type="inferred from homology"/>
<organism>
    <name type="scientific">Escherichia coli (strain SMS-3-5 / SECEC)</name>
    <dbReference type="NCBI Taxonomy" id="439855"/>
    <lineage>
        <taxon>Bacteria</taxon>
        <taxon>Pseudomonadati</taxon>
        <taxon>Pseudomonadota</taxon>
        <taxon>Gammaproteobacteria</taxon>
        <taxon>Enterobacterales</taxon>
        <taxon>Enterobacteriaceae</taxon>
        <taxon>Escherichia</taxon>
    </lineage>
</organism>
<dbReference type="EMBL" id="CP000970">
    <property type="protein sequence ID" value="ACB15920.1"/>
    <property type="molecule type" value="Genomic_DNA"/>
</dbReference>
<dbReference type="RefSeq" id="WP_001026412.1">
    <property type="nucleotide sequence ID" value="NC_010498.1"/>
</dbReference>
<dbReference type="BMRB" id="B1LKU3"/>
<dbReference type="SMR" id="B1LKU3"/>
<dbReference type="KEGG" id="ecm:EcSMS35_2345"/>
<dbReference type="HOGENOM" id="CLU_079503_1_0_6"/>
<dbReference type="Proteomes" id="UP000007011">
    <property type="component" value="Chromosome"/>
</dbReference>
<dbReference type="GO" id="GO:0005886">
    <property type="term" value="C:plasma membrane"/>
    <property type="evidence" value="ECO:0007669"/>
    <property type="project" value="UniProtKB-SubCell"/>
</dbReference>
<dbReference type="GO" id="GO:0020037">
    <property type="term" value="F:heme binding"/>
    <property type="evidence" value="ECO:0007669"/>
    <property type="project" value="InterPro"/>
</dbReference>
<dbReference type="GO" id="GO:0046872">
    <property type="term" value="F:metal ion binding"/>
    <property type="evidence" value="ECO:0007669"/>
    <property type="project" value="UniProtKB-KW"/>
</dbReference>
<dbReference type="GO" id="GO:0017004">
    <property type="term" value="P:cytochrome complex assembly"/>
    <property type="evidence" value="ECO:0007669"/>
    <property type="project" value="UniProtKB-KW"/>
</dbReference>
<dbReference type="FunFam" id="2.40.50.140:FF:000104">
    <property type="entry name" value="Cytochrome c-type biogenesis protein CcmE"/>
    <property type="match status" value="1"/>
</dbReference>
<dbReference type="Gene3D" id="2.40.50.140">
    <property type="entry name" value="Nucleic acid-binding proteins"/>
    <property type="match status" value="1"/>
</dbReference>
<dbReference type="HAMAP" id="MF_01959">
    <property type="entry name" value="CcmE"/>
    <property type="match status" value="1"/>
</dbReference>
<dbReference type="InterPro" id="IPR004329">
    <property type="entry name" value="CcmE"/>
</dbReference>
<dbReference type="InterPro" id="IPR036127">
    <property type="entry name" value="CcmE-like_sf"/>
</dbReference>
<dbReference type="InterPro" id="IPR012340">
    <property type="entry name" value="NA-bd_OB-fold"/>
</dbReference>
<dbReference type="NCBIfam" id="NF009635">
    <property type="entry name" value="PRK13150.1"/>
    <property type="match status" value="1"/>
</dbReference>
<dbReference type="NCBIfam" id="NF009638">
    <property type="entry name" value="PRK13165.1"/>
    <property type="match status" value="1"/>
</dbReference>
<dbReference type="NCBIfam" id="NF009727">
    <property type="entry name" value="PRK13254.1-1"/>
    <property type="match status" value="1"/>
</dbReference>
<dbReference type="NCBIfam" id="NF009729">
    <property type="entry name" value="PRK13254.1-3"/>
    <property type="match status" value="1"/>
</dbReference>
<dbReference type="PANTHER" id="PTHR34128">
    <property type="entry name" value="CYTOCHROME C-TYPE BIOGENESIS PROTEIN CCME HOMOLOG, MITOCHONDRIAL"/>
    <property type="match status" value="1"/>
</dbReference>
<dbReference type="PANTHER" id="PTHR34128:SF2">
    <property type="entry name" value="CYTOCHROME C-TYPE BIOGENESIS PROTEIN CCME HOMOLOG, MITOCHONDRIAL"/>
    <property type="match status" value="1"/>
</dbReference>
<dbReference type="Pfam" id="PF03100">
    <property type="entry name" value="CcmE"/>
    <property type="match status" value="1"/>
</dbReference>
<dbReference type="SUPFAM" id="SSF82093">
    <property type="entry name" value="Heme chaperone CcmE"/>
    <property type="match status" value="1"/>
</dbReference>
<reference key="1">
    <citation type="journal article" date="2008" name="J. Bacteriol.">
        <title>Insights into the environmental resistance gene pool from the genome sequence of the multidrug-resistant environmental isolate Escherichia coli SMS-3-5.</title>
        <authorList>
            <person name="Fricke W.F."/>
            <person name="Wright M.S."/>
            <person name="Lindell A.H."/>
            <person name="Harkins D.M."/>
            <person name="Baker-Austin C."/>
            <person name="Ravel J."/>
            <person name="Stepanauskas R."/>
        </authorList>
    </citation>
    <scope>NUCLEOTIDE SEQUENCE [LARGE SCALE GENOMIC DNA]</scope>
    <source>
        <strain>SMS-3-5 / SECEC</strain>
    </source>
</reference>
<gene>
    <name evidence="1" type="primary">ccmE</name>
    <name evidence="1" type="synonym">cycJ</name>
    <name type="ordered locus">EcSMS35_2345</name>
</gene>
<evidence type="ECO:0000255" key="1">
    <source>
        <dbReference type="HAMAP-Rule" id="MF_01959"/>
    </source>
</evidence>
<evidence type="ECO:0000256" key="2">
    <source>
        <dbReference type="SAM" id="MobiDB-lite"/>
    </source>
</evidence>
<keyword id="KW-0997">Cell inner membrane</keyword>
<keyword id="KW-1003">Cell membrane</keyword>
<keyword id="KW-0201">Cytochrome c-type biogenesis</keyword>
<keyword id="KW-0349">Heme</keyword>
<keyword id="KW-0408">Iron</keyword>
<keyword id="KW-0472">Membrane</keyword>
<keyword id="KW-0479">Metal-binding</keyword>
<keyword id="KW-0735">Signal-anchor</keyword>
<keyword id="KW-0812">Transmembrane</keyword>
<keyword id="KW-1133">Transmembrane helix</keyword>
<accession>B1LKU3</accession>
<sequence>MNIRRKNRLWIACAVLAGLALTIGLVLYALRSNIDLFYTPGEILYGKRETQQMPEVGQRLRVGGMVMPGSVQRDPNSLKVTFTIYDAEGSVDVSYEGILPDLFREGQGVVVQGELEEGNHILAKEVLAKHDENYTPPEVEKAMEANHRRPASVYKDPAS</sequence>
<feature type="chain" id="PRO_1000189022" description="Cytochrome c-type biogenesis protein CcmE">
    <location>
        <begin position="1"/>
        <end position="159"/>
    </location>
</feature>
<feature type="topological domain" description="Cytoplasmic" evidence="1">
    <location>
        <begin position="1"/>
        <end position="8"/>
    </location>
</feature>
<feature type="transmembrane region" description="Helical; Signal-anchor for type II membrane protein" evidence="1">
    <location>
        <begin position="9"/>
        <end position="29"/>
    </location>
</feature>
<feature type="topological domain" description="Periplasmic" evidence="1">
    <location>
        <begin position="30"/>
        <end position="159"/>
    </location>
</feature>
<feature type="region of interest" description="Disordered" evidence="2">
    <location>
        <begin position="134"/>
        <end position="159"/>
    </location>
</feature>
<feature type="compositionally biased region" description="Basic and acidic residues" evidence="2">
    <location>
        <begin position="134"/>
        <end position="147"/>
    </location>
</feature>
<feature type="binding site" description="covalent" evidence="1">
    <location>
        <position position="130"/>
    </location>
    <ligand>
        <name>heme</name>
        <dbReference type="ChEBI" id="CHEBI:30413"/>
    </ligand>
</feature>
<feature type="binding site" description="axial binding residue" evidence="1">
    <location>
        <position position="134"/>
    </location>
    <ligand>
        <name>heme</name>
        <dbReference type="ChEBI" id="CHEBI:30413"/>
    </ligand>
    <ligandPart>
        <name>Fe</name>
        <dbReference type="ChEBI" id="CHEBI:18248"/>
    </ligandPart>
</feature>